<keyword id="KW-0249">Electron transport</keyword>
<keyword id="KW-0274">FAD</keyword>
<keyword id="KW-0285">Flavoprotein</keyword>
<keyword id="KW-0496">Mitochondrion</keyword>
<keyword id="KW-1185">Reference proteome</keyword>
<keyword id="KW-0809">Transit peptide</keyword>
<keyword id="KW-0813">Transport</keyword>
<dbReference type="EMBL" id="AL662994">
    <property type="protein sequence ID" value="CAE04393.2"/>
    <property type="molecule type" value="Genomic_DNA"/>
</dbReference>
<dbReference type="EMBL" id="AP008210">
    <property type="protein sequence ID" value="BAF14097.1"/>
    <property type="molecule type" value="Genomic_DNA"/>
</dbReference>
<dbReference type="EMBL" id="AP014960">
    <property type="protein sequence ID" value="BAS87972.1"/>
    <property type="molecule type" value="Genomic_DNA"/>
</dbReference>
<dbReference type="EMBL" id="CM000141">
    <property type="protein sequence ID" value="EAZ29915.1"/>
    <property type="molecule type" value="Genomic_DNA"/>
</dbReference>
<dbReference type="EMBL" id="AK063110">
    <property type="protein sequence ID" value="BAG88556.1"/>
    <property type="molecule type" value="mRNA"/>
</dbReference>
<dbReference type="RefSeq" id="XP_015633831.1">
    <property type="nucleotide sequence ID" value="XM_015778345.1"/>
</dbReference>
<dbReference type="SMR" id="Q7F9U3"/>
<dbReference type="FunCoup" id="Q7F9U3">
    <property type="interactions" value="2132"/>
</dbReference>
<dbReference type="STRING" id="39947.Q7F9U3"/>
<dbReference type="PaxDb" id="39947-Q7F9U3"/>
<dbReference type="EnsemblPlants" id="Os04t0182800-01">
    <property type="protein sequence ID" value="Os04t0182800-01"/>
    <property type="gene ID" value="Os04g0182800"/>
</dbReference>
<dbReference type="Gramene" id="Os04t0182800-01">
    <property type="protein sequence ID" value="Os04t0182800-01"/>
    <property type="gene ID" value="Os04g0182800"/>
</dbReference>
<dbReference type="KEGG" id="dosa:Os04g0182800"/>
<dbReference type="eggNOG" id="KOG3180">
    <property type="taxonomic scope" value="Eukaryota"/>
</dbReference>
<dbReference type="HOGENOM" id="CLU_060196_0_0_1"/>
<dbReference type="InParanoid" id="Q7F9U3"/>
<dbReference type="OMA" id="EINQPRI"/>
<dbReference type="OrthoDB" id="276685at2759"/>
<dbReference type="Proteomes" id="UP000000763">
    <property type="component" value="Chromosome 4"/>
</dbReference>
<dbReference type="Proteomes" id="UP000007752">
    <property type="component" value="Chromosome 4"/>
</dbReference>
<dbReference type="Proteomes" id="UP000059680">
    <property type="component" value="Chromosome 4"/>
</dbReference>
<dbReference type="GO" id="GO:0005759">
    <property type="term" value="C:mitochondrial matrix"/>
    <property type="evidence" value="ECO:0007669"/>
    <property type="project" value="UniProtKB-SubCell"/>
</dbReference>
<dbReference type="GO" id="GO:0005739">
    <property type="term" value="C:mitochondrion"/>
    <property type="evidence" value="ECO:0000318"/>
    <property type="project" value="GO_Central"/>
</dbReference>
<dbReference type="GO" id="GO:0009055">
    <property type="term" value="F:electron transfer activity"/>
    <property type="evidence" value="ECO:0000318"/>
    <property type="project" value="GO_Central"/>
</dbReference>
<dbReference type="GO" id="GO:0033539">
    <property type="term" value="P:fatty acid beta-oxidation using acyl-CoA dehydrogenase"/>
    <property type="evidence" value="ECO:0000318"/>
    <property type="project" value="GO_Central"/>
</dbReference>
<dbReference type="CDD" id="cd01714">
    <property type="entry name" value="ETF_beta"/>
    <property type="match status" value="1"/>
</dbReference>
<dbReference type="FunFam" id="3.40.50.620:FF:000011">
    <property type="entry name" value="Electron transfer flavoprotein subunit beta"/>
    <property type="match status" value="1"/>
</dbReference>
<dbReference type="Gene3D" id="3.40.50.620">
    <property type="entry name" value="HUPs"/>
    <property type="match status" value="1"/>
</dbReference>
<dbReference type="InterPro" id="IPR000049">
    <property type="entry name" value="ET-Flavoprotein_bsu_CS"/>
</dbReference>
<dbReference type="InterPro" id="IPR014730">
    <property type="entry name" value="ETF_a/b_N"/>
</dbReference>
<dbReference type="InterPro" id="IPR012255">
    <property type="entry name" value="ETF_b"/>
</dbReference>
<dbReference type="InterPro" id="IPR033948">
    <property type="entry name" value="ETF_beta_N"/>
</dbReference>
<dbReference type="InterPro" id="IPR014729">
    <property type="entry name" value="Rossmann-like_a/b/a_fold"/>
</dbReference>
<dbReference type="PANTHER" id="PTHR21294">
    <property type="entry name" value="ELECTRON TRANSFER FLAVOPROTEIN BETA-SUBUNIT"/>
    <property type="match status" value="1"/>
</dbReference>
<dbReference type="PANTHER" id="PTHR21294:SF8">
    <property type="entry name" value="ELECTRON TRANSFER FLAVOPROTEIN SUBUNIT BETA"/>
    <property type="match status" value="1"/>
</dbReference>
<dbReference type="Pfam" id="PF01012">
    <property type="entry name" value="ETF"/>
    <property type="match status" value="1"/>
</dbReference>
<dbReference type="PIRSF" id="PIRSF000090">
    <property type="entry name" value="Beta-ETF"/>
    <property type="match status" value="1"/>
</dbReference>
<dbReference type="SMART" id="SM00893">
    <property type="entry name" value="ETF"/>
    <property type="match status" value="1"/>
</dbReference>
<dbReference type="SUPFAM" id="SSF52402">
    <property type="entry name" value="Adenine nucleotide alpha hydrolases-like"/>
    <property type="match status" value="1"/>
</dbReference>
<dbReference type="PROSITE" id="PS01065">
    <property type="entry name" value="ETF_BETA"/>
    <property type="match status" value="1"/>
</dbReference>
<feature type="transit peptide" description="Mitochondrion" evidence="2">
    <location>
        <begin position="1"/>
        <end status="unknown"/>
    </location>
</feature>
<feature type="chain" id="PRO_0000324181" description="Electron transfer flavoprotein subunit beta, mitochondrial">
    <location>
        <begin status="unknown"/>
        <end position="253"/>
    </location>
</feature>
<gene>
    <name type="primary">ETFB</name>
    <name type="ordered locus">Os04g0182800</name>
    <name type="ordered locus">LOC_Os04g10400</name>
    <name type="ORF">OsJ_013398</name>
    <name type="ORF">OSJNBb0006L01.5</name>
</gene>
<protein>
    <recommendedName>
        <fullName>Electron transfer flavoprotein subunit beta, mitochondrial</fullName>
        <shortName>Beta-ETF</shortName>
    </recommendedName>
</protein>
<evidence type="ECO:0000250" key="1"/>
<evidence type="ECO:0000255" key="2"/>
<evidence type="ECO:0000305" key="3"/>
<name>ETFB_ORYSJ</name>
<reference key="1">
    <citation type="journal article" date="2002" name="Nature">
        <title>Sequence and analysis of rice chromosome 4.</title>
        <authorList>
            <person name="Feng Q."/>
            <person name="Zhang Y."/>
            <person name="Hao P."/>
            <person name="Wang S."/>
            <person name="Fu G."/>
            <person name="Huang Y."/>
            <person name="Li Y."/>
            <person name="Zhu J."/>
            <person name="Liu Y."/>
            <person name="Hu X."/>
            <person name="Jia P."/>
            <person name="Zhang Y."/>
            <person name="Zhao Q."/>
            <person name="Ying K."/>
            <person name="Yu S."/>
            <person name="Tang Y."/>
            <person name="Weng Q."/>
            <person name="Zhang L."/>
            <person name="Lu Y."/>
            <person name="Mu J."/>
            <person name="Lu Y."/>
            <person name="Zhang L.S."/>
            <person name="Yu Z."/>
            <person name="Fan D."/>
            <person name="Liu X."/>
            <person name="Lu T."/>
            <person name="Li C."/>
            <person name="Wu Y."/>
            <person name="Sun T."/>
            <person name="Lei H."/>
            <person name="Li T."/>
            <person name="Hu H."/>
            <person name="Guan J."/>
            <person name="Wu M."/>
            <person name="Zhang R."/>
            <person name="Zhou B."/>
            <person name="Chen Z."/>
            <person name="Chen L."/>
            <person name="Jin Z."/>
            <person name="Wang R."/>
            <person name="Yin H."/>
            <person name="Cai Z."/>
            <person name="Ren S."/>
            <person name="Lv G."/>
            <person name="Gu W."/>
            <person name="Zhu G."/>
            <person name="Tu Y."/>
            <person name="Jia J."/>
            <person name="Zhang Y."/>
            <person name="Chen J."/>
            <person name="Kang H."/>
            <person name="Chen X."/>
            <person name="Shao C."/>
            <person name="Sun Y."/>
            <person name="Hu Q."/>
            <person name="Zhang X."/>
            <person name="Zhang W."/>
            <person name="Wang L."/>
            <person name="Ding C."/>
            <person name="Sheng H."/>
            <person name="Gu J."/>
            <person name="Chen S."/>
            <person name="Ni L."/>
            <person name="Zhu F."/>
            <person name="Chen W."/>
            <person name="Lan L."/>
            <person name="Lai Y."/>
            <person name="Cheng Z."/>
            <person name="Gu M."/>
            <person name="Jiang J."/>
            <person name="Li J."/>
            <person name="Hong G."/>
            <person name="Xue Y."/>
            <person name="Han B."/>
        </authorList>
    </citation>
    <scope>NUCLEOTIDE SEQUENCE [LARGE SCALE GENOMIC DNA]</scope>
    <source>
        <strain>cv. Nipponbare</strain>
    </source>
</reference>
<reference key="2">
    <citation type="journal article" date="2005" name="Nature">
        <title>The map-based sequence of the rice genome.</title>
        <authorList>
            <consortium name="International rice genome sequencing project (IRGSP)"/>
        </authorList>
    </citation>
    <scope>NUCLEOTIDE SEQUENCE [LARGE SCALE GENOMIC DNA]</scope>
    <source>
        <strain>cv. Nipponbare</strain>
    </source>
</reference>
<reference key="3">
    <citation type="journal article" date="2008" name="Nucleic Acids Res.">
        <title>The rice annotation project database (RAP-DB): 2008 update.</title>
        <authorList>
            <consortium name="The rice annotation project (RAP)"/>
        </authorList>
    </citation>
    <scope>GENOME REANNOTATION</scope>
    <source>
        <strain>cv. Nipponbare</strain>
    </source>
</reference>
<reference key="4">
    <citation type="journal article" date="2013" name="Rice">
        <title>Improvement of the Oryza sativa Nipponbare reference genome using next generation sequence and optical map data.</title>
        <authorList>
            <person name="Kawahara Y."/>
            <person name="de la Bastide M."/>
            <person name="Hamilton J.P."/>
            <person name="Kanamori H."/>
            <person name="McCombie W.R."/>
            <person name="Ouyang S."/>
            <person name="Schwartz D.C."/>
            <person name="Tanaka T."/>
            <person name="Wu J."/>
            <person name="Zhou S."/>
            <person name="Childs K.L."/>
            <person name="Davidson R.M."/>
            <person name="Lin H."/>
            <person name="Quesada-Ocampo L."/>
            <person name="Vaillancourt B."/>
            <person name="Sakai H."/>
            <person name="Lee S.S."/>
            <person name="Kim J."/>
            <person name="Numa H."/>
            <person name="Itoh T."/>
            <person name="Buell C.R."/>
            <person name="Matsumoto T."/>
        </authorList>
    </citation>
    <scope>GENOME REANNOTATION</scope>
    <source>
        <strain>cv. Nipponbare</strain>
    </source>
</reference>
<reference key="5">
    <citation type="journal article" date="2005" name="PLoS Biol.">
        <title>The genomes of Oryza sativa: a history of duplications.</title>
        <authorList>
            <person name="Yu J."/>
            <person name="Wang J."/>
            <person name="Lin W."/>
            <person name="Li S."/>
            <person name="Li H."/>
            <person name="Zhou J."/>
            <person name="Ni P."/>
            <person name="Dong W."/>
            <person name="Hu S."/>
            <person name="Zeng C."/>
            <person name="Zhang J."/>
            <person name="Zhang Y."/>
            <person name="Li R."/>
            <person name="Xu Z."/>
            <person name="Li S."/>
            <person name="Li X."/>
            <person name="Zheng H."/>
            <person name="Cong L."/>
            <person name="Lin L."/>
            <person name="Yin J."/>
            <person name="Geng J."/>
            <person name="Li G."/>
            <person name="Shi J."/>
            <person name="Liu J."/>
            <person name="Lv H."/>
            <person name="Li J."/>
            <person name="Wang J."/>
            <person name="Deng Y."/>
            <person name="Ran L."/>
            <person name="Shi X."/>
            <person name="Wang X."/>
            <person name="Wu Q."/>
            <person name="Li C."/>
            <person name="Ren X."/>
            <person name="Wang J."/>
            <person name="Wang X."/>
            <person name="Li D."/>
            <person name="Liu D."/>
            <person name="Zhang X."/>
            <person name="Ji Z."/>
            <person name="Zhao W."/>
            <person name="Sun Y."/>
            <person name="Zhang Z."/>
            <person name="Bao J."/>
            <person name="Han Y."/>
            <person name="Dong L."/>
            <person name="Ji J."/>
            <person name="Chen P."/>
            <person name="Wu S."/>
            <person name="Liu J."/>
            <person name="Xiao Y."/>
            <person name="Bu D."/>
            <person name="Tan J."/>
            <person name="Yang L."/>
            <person name="Ye C."/>
            <person name="Zhang J."/>
            <person name="Xu J."/>
            <person name="Zhou Y."/>
            <person name="Yu Y."/>
            <person name="Zhang B."/>
            <person name="Zhuang S."/>
            <person name="Wei H."/>
            <person name="Liu B."/>
            <person name="Lei M."/>
            <person name="Yu H."/>
            <person name="Li Y."/>
            <person name="Xu H."/>
            <person name="Wei S."/>
            <person name="He X."/>
            <person name="Fang L."/>
            <person name="Zhang Z."/>
            <person name="Zhang Y."/>
            <person name="Huang X."/>
            <person name="Su Z."/>
            <person name="Tong W."/>
            <person name="Li J."/>
            <person name="Tong Z."/>
            <person name="Li S."/>
            <person name="Ye J."/>
            <person name="Wang L."/>
            <person name="Fang L."/>
            <person name="Lei T."/>
            <person name="Chen C.-S."/>
            <person name="Chen H.-C."/>
            <person name="Xu Z."/>
            <person name="Li H."/>
            <person name="Huang H."/>
            <person name="Zhang F."/>
            <person name="Xu H."/>
            <person name="Li N."/>
            <person name="Zhao C."/>
            <person name="Li S."/>
            <person name="Dong L."/>
            <person name="Huang Y."/>
            <person name="Li L."/>
            <person name="Xi Y."/>
            <person name="Qi Q."/>
            <person name="Li W."/>
            <person name="Zhang B."/>
            <person name="Hu W."/>
            <person name="Zhang Y."/>
            <person name="Tian X."/>
            <person name="Jiao Y."/>
            <person name="Liang X."/>
            <person name="Jin J."/>
            <person name="Gao L."/>
            <person name="Zheng W."/>
            <person name="Hao B."/>
            <person name="Liu S.-M."/>
            <person name="Wang W."/>
            <person name="Yuan L."/>
            <person name="Cao M."/>
            <person name="McDermott J."/>
            <person name="Samudrala R."/>
            <person name="Wang J."/>
            <person name="Wong G.K.-S."/>
            <person name="Yang H."/>
        </authorList>
    </citation>
    <scope>NUCLEOTIDE SEQUENCE [LARGE SCALE GENOMIC DNA]</scope>
    <source>
        <strain>cv. Nipponbare</strain>
    </source>
</reference>
<reference key="6">
    <citation type="journal article" date="2003" name="Science">
        <title>Collection, mapping, and annotation of over 28,000 cDNA clones from japonica rice.</title>
        <authorList>
            <consortium name="The rice full-length cDNA consortium"/>
        </authorList>
    </citation>
    <scope>NUCLEOTIDE SEQUENCE [LARGE SCALE MRNA]</scope>
    <source>
        <strain>cv. Nipponbare</strain>
    </source>
</reference>
<comment type="function">
    <text evidence="1">The electron transfer flavoprotein serves as a specific electron acceptor for several dehydrogenases, including five acyl-CoA dehydrogenases, glutaryl-CoA and sarcosine dehydrogenase. It transfers the electrons to the main mitochondrial respiratory chain via ETF-ubiquinone oxidoreductase (ETF dehydrogenase) (By similarity).</text>
</comment>
<comment type="cofactor">
    <cofactor evidence="1">
        <name>FAD</name>
        <dbReference type="ChEBI" id="CHEBI:57692"/>
    </cofactor>
    <text evidence="1">Binds 1 FAD per dimer.</text>
</comment>
<comment type="cofactor">
    <cofactor evidence="1">
        <name>AMP</name>
        <dbReference type="ChEBI" id="CHEBI:456215"/>
    </cofactor>
    <text evidence="1">Binds 1 AMP per subunit.</text>
</comment>
<comment type="subunit">
    <text evidence="1">Heterodimer of an alpha and a beta subunit.</text>
</comment>
<comment type="subcellular location">
    <subcellularLocation>
        <location evidence="1">Mitochondrion matrix</location>
    </subcellularLocation>
</comment>
<comment type="similarity">
    <text evidence="3">Belongs to the ETF beta-subunit/FixA family.</text>
</comment>
<organism>
    <name type="scientific">Oryza sativa subsp. japonica</name>
    <name type="common">Rice</name>
    <dbReference type="NCBI Taxonomy" id="39947"/>
    <lineage>
        <taxon>Eukaryota</taxon>
        <taxon>Viridiplantae</taxon>
        <taxon>Streptophyta</taxon>
        <taxon>Embryophyta</taxon>
        <taxon>Tracheophyta</taxon>
        <taxon>Spermatophyta</taxon>
        <taxon>Magnoliopsida</taxon>
        <taxon>Liliopsida</taxon>
        <taxon>Poales</taxon>
        <taxon>Poaceae</taxon>
        <taxon>BOP clade</taxon>
        <taxon>Oryzoideae</taxon>
        <taxon>Oryzeae</taxon>
        <taxon>Oryzinae</taxon>
        <taxon>Oryza</taxon>
        <taxon>Oryza sativa</taxon>
    </lineage>
</organism>
<proteinExistence type="evidence at transcript level"/>
<accession>Q7F9U3</accession>
<accession>B7E859</accession>
<sequence>MKILVAVKRVVDYAVKVRVRPDRTGVETASVKMSMNPFCEIAVEEALRLRESGAATEVVAATVGPSQSADTLRTALAMGADRAVHVLHDPDPSRPLLPLAVAKILRALALQENPGLVILGKQAIDDDCNQTGQMLAGLLNWPQGTFASKVILNKEKATVEREVDGGIETISLDLPAVITTDLRLNQPRYATLPNIMKAKSKVIKKVTPEDLDVDIRSDMEVVEVTEPPKRKAGVILSSVDELVDRLKNEARVL</sequence>